<comment type="catalytic activity">
    <reaction evidence="1">
        <text>L-histidinol phosphate + 2-oxoglutarate = 3-(imidazol-4-yl)-2-oxopropyl phosphate + L-glutamate</text>
        <dbReference type="Rhea" id="RHEA:23744"/>
        <dbReference type="ChEBI" id="CHEBI:16810"/>
        <dbReference type="ChEBI" id="CHEBI:29985"/>
        <dbReference type="ChEBI" id="CHEBI:57766"/>
        <dbReference type="ChEBI" id="CHEBI:57980"/>
        <dbReference type="EC" id="2.6.1.9"/>
    </reaction>
</comment>
<comment type="cofactor">
    <cofactor evidence="1">
        <name>pyridoxal 5'-phosphate</name>
        <dbReference type="ChEBI" id="CHEBI:597326"/>
    </cofactor>
</comment>
<comment type="pathway">
    <text evidence="1">Amino-acid biosynthesis; L-histidine biosynthesis; L-histidine from 5-phospho-alpha-D-ribose 1-diphosphate: step 7/9.</text>
</comment>
<comment type="subunit">
    <text evidence="1">Homodimer.</text>
</comment>
<comment type="similarity">
    <text evidence="1">Belongs to the class-II pyridoxal-phosphate-dependent aminotransferase family. Histidinol-phosphate aminotransferase subfamily.</text>
</comment>
<keyword id="KW-0028">Amino-acid biosynthesis</keyword>
<keyword id="KW-0032">Aminotransferase</keyword>
<keyword id="KW-0368">Histidine biosynthesis</keyword>
<keyword id="KW-0663">Pyridoxal phosphate</keyword>
<keyword id="KW-0808">Transferase</keyword>
<protein>
    <recommendedName>
        <fullName evidence="1">Histidinol-phosphate aminotransferase</fullName>
        <ecNumber evidence="1">2.6.1.9</ecNumber>
    </recommendedName>
    <alternativeName>
        <fullName evidence="1">Imidazole acetol-phosphate transaminase</fullName>
    </alternativeName>
</protein>
<feature type="chain" id="PRO_1000084204" description="Histidinol-phosphate aminotransferase">
    <location>
        <begin position="1"/>
        <end position="352"/>
    </location>
</feature>
<feature type="modified residue" description="N6-(pyridoxal phosphate)lysine" evidence="1">
    <location>
        <position position="221"/>
    </location>
</feature>
<sequence length="352" mass="39788">MKEQLNQLSAYQPGLSPRALKEKYGIEGDLYKLASNENLYGPSPKVKEAISAHLDELYYYPETGSPTLKAAISKHLNVDQSRILFGAGLDEVILMISRAVLTPGDTIVTSEATFGQYYHNAIVESANVIQVPLKDGGFDLEGILKEVNEDTSLVWLCNPNNPTGTYFNHESLDSFLSQVPPHVPVIIDEAYFEFVTAEDYPDTLALQQKYDNAFLLRTFSKAYGLAGLRVGYVVASEHAIEKWNIIRPPFNVTRISEYAAVAALEDQQYLKEVTHKNSVERERFYQLPQSEYFLPSQTNFIFVKTKRVNELYEALLNVGCITRPFPTGVRITIGFKEQNDKMLEVLSNFKYE</sequence>
<gene>
    <name evidence="1" type="primary">hisC</name>
    <name type="ordered locus">SaurJH9_0747</name>
</gene>
<dbReference type="EC" id="2.6.1.9" evidence="1"/>
<dbReference type="EMBL" id="CP000703">
    <property type="protein sequence ID" value="ABQ48550.1"/>
    <property type="molecule type" value="Genomic_DNA"/>
</dbReference>
<dbReference type="RefSeq" id="WP_000663030.1">
    <property type="nucleotide sequence ID" value="NC_009487.1"/>
</dbReference>
<dbReference type="SMR" id="A5IQS7"/>
<dbReference type="KEGG" id="saj:SaurJH9_0747"/>
<dbReference type="HOGENOM" id="CLU_017584_3_3_9"/>
<dbReference type="UniPathway" id="UPA00031">
    <property type="reaction ID" value="UER00012"/>
</dbReference>
<dbReference type="GO" id="GO:0004400">
    <property type="term" value="F:histidinol-phosphate transaminase activity"/>
    <property type="evidence" value="ECO:0007669"/>
    <property type="project" value="UniProtKB-UniRule"/>
</dbReference>
<dbReference type="GO" id="GO:0030170">
    <property type="term" value="F:pyridoxal phosphate binding"/>
    <property type="evidence" value="ECO:0007669"/>
    <property type="project" value="InterPro"/>
</dbReference>
<dbReference type="GO" id="GO:0000105">
    <property type="term" value="P:L-histidine biosynthetic process"/>
    <property type="evidence" value="ECO:0007669"/>
    <property type="project" value="UniProtKB-UniRule"/>
</dbReference>
<dbReference type="CDD" id="cd00609">
    <property type="entry name" value="AAT_like"/>
    <property type="match status" value="1"/>
</dbReference>
<dbReference type="Gene3D" id="3.90.1150.10">
    <property type="entry name" value="Aspartate Aminotransferase, domain 1"/>
    <property type="match status" value="1"/>
</dbReference>
<dbReference type="Gene3D" id="3.40.640.10">
    <property type="entry name" value="Type I PLP-dependent aspartate aminotransferase-like (Major domain)"/>
    <property type="match status" value="1"/>
</dbReference>
<dbReference type="HAMAP" id="MF_01023">
    <property type="entry name" value="HisC_aminotrans_2"/>
    <property type="match status" value="1"/>
</dbReference>
<dbReference type="InterPro" id="IPR001917">
    <property type="entry name" value="Aminotrans_II_pyridoxalP_BS"/>
</dbReference>
<dbReference type="InterPro" id="IPR004839">
    <property type="entry name" value="Aminotransferase_I/II_large"/>
</dbReference>
<dbReference type="InterPro" id="IPR005861">
    <property type="entry name" value="HisP_aminotrans"/>
</dbReference>
<dbReference type="InterPro" id="IPR050106">
    <property type="entry name" value="HistidinolP_aminotransfase"/>
</dbReference>
<dbReference type="InterPro" id="IPR015424">
    <property type="entry name" value="PyrdxlP-dep_Trfase"/>
</dbReference>
<dbReference type="InterPro" id="IPR015421">
    <property type="entry name" value="PyrdxlP-dep_Trfase_major"/>
</dbReference>
<dbReference type="InterPro" id="IPR015422">
    <property type="entry name" value="PyrdxlP-dep_Trfase_small"/>
</dbReference>
<dbReference type="NCBIfam" id="TIGR01141">
    <property type="entry name" value="hisC"/>
    <property type="match status" value="1"/>
</dbReference>
<dbReference type="PANTHER" id="PTHR43643:SF3">
    <property type="entry name" value="HISTIDINOL-PHOSPHATE AMINOTRANSFERASE"/>
    <property type="match status" value="1"/>
</dbReference>
<dbReference type="PANTHER" id="PTHR43643">
    <property type="entry name" value="HISTIDINOL-PHOSPHATE AMINOTRANSFERASE 2"/>
    <property type="match status" value="1"/>
</dbReference>
<dbReference type="Pfam" id="PF00155">
    <property type="entry name" value="Aminotran_1_2"/>
    <property type="match status" value="1"/>
</dbReference>
<dbReference type="SUPFAM" id="SSF53383">
    <property type="entry name" value="PLP-dependent transferases"/>
    <property type="match status" value="1"/>
</dbReference>
<dbReference type="PROSITE" id="PS00599">
    <property type="entry name" value="AA_TRANSFER_CLASS_2"/>
    <property type="match status" value="1"/>
</dbReference>
<accession>A5IQS7</accession>
<evidence type="ECO:0000255" key="1">
    <source>
        <dbReference type="HAMAP-Rule" id="MF_01023"/>
    </source>
</evidence>
<name>HIS8_STAA9</name>
<reference key="1">
    <citation type="submission" date="2007-05" db="EMBL/GenBank/DDBJ databases">
        <title>Complete sequence of chromosome of Staphylococcus aureus subsp. aureus JH9.</title>
        <authorList>
            <consortium name="US DOE Joint Genome Institute"/>
            <person name="Copeland A."/>
            <person name="Lucas S."/>
            <person name="Lapidus A."/>
            <person name="Barry K."/>
            <person name="Detter J.C."/>
            <person name="Glavina del Rio T."/>
            <person name="Hammon N."/>
            <person name="Israni S."/>
            <person name="Pitluck S."/>
            <person name="Chain P."/>
            <person name="Malfatti S."/>
            <person name="Shin M."/>
            <person name="Vergez L."/>
            <person name="Schmutz J."/>
            <person name="Larimer F."/>
            <person name="Land M."/>
            <person name="Hauser L."/>
            <person name="Kyrpides N."/>
            <person name="Kim E."/>
            <person name="Tomasz A."/>
            <person name="Richardson P."/>
        </authorList>
    </citation>
    <scope>NUCLEOTIDE SEQUENCE [LARGE SCALE GENOMIC DNA]</scope>
    <source>
        <strain>JH9</strain>
    </source>
</reference>
<proteinExistence type="inferred from homology"/>
<organism>
    <name type="scientific">Staphylococcus aureus (strain JH9)</name>
    <dbReference type="NCBI Taxonomy" id="359786"/>
    <lineage>
        <taxon>Bacteria</taxon>
        <taxon>Bacillati</taxon>
        <taxon>Bacillota</taxon>
        <taxon>Bacilli</taxon>
        <taxon>Bacillales</taxon>
        <taxon>Staphylococcaceae</taxon>
        <taxon>Staphylococcus</taxon>
    </lineage>
</organism>